<evidence type="ECO:0000250" key="1"/>
<evidence type="ECO:0000255" key="2">
    <source>
        <dbReference type="HAMAP-Rule" id="MF_01356"/>
    </source>
</evidence>
<dbReference type="EC" id="7.1.1.-" evidence="2"/>
<dbReference type="EMBL" id="CP001068">
    <property type="protein sequence ID" value="ACD27347.1"/>
    <property type="molecule type" value="Genomic_DNA"/>
</dbReference>
<dbReference type="SMR" id="B2U7R0"/>
<dbReference type="STRING" id="402626.Rpic_2213"/>
<dbReference type="KEGG" id="rpi:Rpic_2213"/>
<dbReference type="eggNOG" id="COG0377">
    <property type="taxonomic scope" value="Bacteria"/>
</dbReference>
<dbReference type="HOGENOM" id="CLU_055737_7_3_4"/>
<dbReference type="GO" id="GO:0005886">
    <property type="term" value="C:plasma membrane"/>
    <property type="evidence" value="ECO:0007669"/>
    <property type="project" value="UniProtKB-SubCell"/>
</dbReference>
<dbReference type="GO" id="GO:0045271">
    <property type="term" value="C:respiratory chain complex I"/>
    <property type="evidence" value="ECO:0007669"/>
    <property type="project" value="TreeGrafter"/>
</dbReference>
<dbReference type="GO" id="GO:0051539">
    <property type="term" value="F:4 iron, 4 sulfur cluster binding"/>
    <property type="evidence" value="ECO:0007669"/>
    <property type="project" value="UniProtKB-KW"/>
</dbReference>
<dbReference type="GO" id="GO:0005506">
    <property type="term" value="F:iron ion binding"/>
    <property type="evidence" value="ECO:0007669"/>
    <property type="project" value="UniProtKB-UniRule"/>
</dbReference>
<dbReference type="GO" id="GO:0008137">
    <property type="term" value="F:NADH dehydrogenase (ubiquinone) activity"/>
    <property type="evidence" value="ECO:0007669"/>
    <property type="project" value="InterPro"/>
</dbReference>
<dbReference type="GO" id="GO:0050136">
    <property type="term" value="F:NADH:ubiquinone reductase (non-electrogenic) activity"/>
    <property type="evidence" value="ECO:0007669"/>
    <property type="project" value="UniProtKB-UniRule"/>
</dbReference>
<dbReference type="GO" id="GO:0048038">
    <property type="term" value="F:quinone binding"/>
    <property type="evidence" value="ECO:0007669"/>
    <property type="project" value="UniProtKB-KW"/>
</dbReference>
<dbReference type="GO" id="GO:0009060">
    <property type="term" value="P:aerobic respiration"/>
    <property type="evidence" value="ECO:0007669"/>
    <property type="project" value="TreeGrafter"/>
</dbReference>
<dbReference type="GO" id="GO:0015990">
    <property type="term" value="P:electron transport coupled proton transport"/>
    <property type="evidence" value="ECO:0007669"/>
    <property type="project" value="TreeGrafter"/>
</dbReference>
<dbReference type="FunFam" id="3.40.50.12280:FF:000001">
    <property type="entry name" value="NADH-quinone oxidoreductase subunit B 2"/>
    <property type="match status" value="1"/>
</dbReference>
<dbReference type="Gene3D" id="3.40.50.12280">
    <property type="match status" value="1"/>
</dbReference>
<dbReference type="HAMAP" id="MF_01356">
    <property type="entry name" value="NDH1_NuoB"/>
    <property type="match status" value="1"/>
</dbReference>
<dbReference type="InterPro" id="IPR006137">
    <property type="entry name" value="NADH_UbQ_OxRdtase-like_20kDa"/>
</dbReference>
<dbReference type="InterPro" id="IPR006138">
    <property type="entry name" value="NADH_UQ_OxRdtase_20Kd_su"/>
</dbReference>
<dbReference type="NCBIfam" id="TIGR01957">
    <property type="entry name" value="nuoB_fam"/>
    <property type="match status" value="1"/>
</dbReference>
<dbReference type="NCBIfam" id="NF005012">
    <property type="entry name" value="PRK06411.1"/>
    <property type="match status" value="1"/>
</dbReference>
<dbReference type="PANTHER" id="PTHR11995">
    <property type="entry name" value="NADH DEHYDROGENASE"/>
    <property type="match status" value="1"/>
</dbReference>
<dbReference type="PANTHER" id="PTHR11995:SF14">
    <property type="entry name" value="NADH DEHYDROGENASE [UBIQUINONE] IRON-SULFUR PROTEIN 7, MITOCHONDRIAL"/>
    <property type="match status" value="1"/>
</dbReference>
<dbReference type="Pfam" id="PF01058">
    <property type="entry name" value="Oxidored_q6"/>
    <property type="match status" value="1"/>
</dbReference>
<dbReference type="SUPFAM" id="SSF56770">
    <property type="entry name" value="HydA/Nqo6-like"/>
    <property type="match status" value="1"/>
</dbReference>
<dbReference type="PROSITE" id="PS01150">
    <property type="entry name" value="COMPLEX1_20K"/>
    <property type="match status" value="1"/>
</dbReference>
<sequence length="160" mass="17618">MAIEGVLNEGFVTTTADKLINWTRTGSLWPMTFGLACCAVEMMHAGASRYDLDRFGVVFRPSPRQSDVMIVAGTLCNKMAPALRKVYDQMAEPRWVISMGSCANGGGYYHYSYSVVRGCDRIVPVDVYVPGCPPTAEALIYGIIQLQAKIRRTNTIARKA</sequence>
<organism>
    <name type="scientific">Ralstonia pickettii (strain 12J)</name>
    <dbReference type="NCBI Taxonomy" id="402626"/>
    <lineage>
        <taxon>Bacteria</taxon>
        <taxon>Pseudomonadati</taxon>
        <taxon>Pseudomonadota</taxon>
        <taxon>Betaproteobacteria</taxon>
        <taxon>Burkholderiales</taxon>
        <taxon>Burkholderiaceae</taxon>
        <taxon>Ralstonia</taxon>
    </lineage>
</organism>
<name>NUOB_RALPJ</name>
<reference key="1">
    <citation type="submission" date="2008-05" db="EMBL/GenBank/DDBJ databases">
        <title>Complete sequence of chromosome 1 of Ralstonia pickettii 12J.</title>
        <authorList>
            <person name="Lucas S."/>
            <person name="Copeland A."/>
            <person name="Lapidus A."/>
            <person name="Glavina del Rio T."/>
            <person name="Dalin E."/>
            <person name="Tice H."/>
            <person name="Bruce D."/>
            <person name="Goodwin L."/>
            <person name="Pitluck S."/>
            <person name="Meincke L."/>
            <person name="Brettin T."/>
            <person name="Detter J.C."/>
            <person name="Han C."/>
            <person name="Kuske C.R."/>
            <person name="Schmutz J."/>
            <person name="Larimer F."/>
            <person name="Land M."/>
            <person name="Hauser L."/>
            <person name="Kyrpides N."/>
            <person name="Mikhailova N."/>
            <person name="Marsh T."/>
            <person name="Richardson P."/>
        </authorList>
    </citation>
    <scope>NUCLEOTIDE SEQUENCE [LARGE SCALE GENOMIC DNA]</scope>
    <source>
        <strain>12J</strain>
    </source>
</reference>
<protein>
    <recommendedName>
        <fullName evidence="2">NADH-quinone oxidoreductase subunit B</fullName>
        <ecNumber evidence="2">7.1.1.-</ecNumber>
    </recommendedName>
    <alternativeName>
        <fullName evidence="2">NADH dehydrogenase I subunit B</fullName>
    </alternativeName>
    <alternativeName>
        <fullName evidence="2">NDH-1 subunit B</fullName>
    </alternativeName>
</protein>
<keyword id="KW-0004">4Fe-4S</keyword>
<keyword id="KW-0997">Cell inner membrane</keyword>
<keyword id="KW-1003">Cell membrane</keyword>
<keyword id="KW-0408">Iron</keyword>
<keyword id="KW-0411">Iron-sulfur</keyword>
<keyword id="KW-0472">Membrane</keyword>
<keyword id="KW-0479">Metal-binding</keyword>
<keyword id="KW-0520">NAD</keyword>
<keyword id="KW-0874">Quinone</keyword>
<keyword id="KW-1278">Translocase</keyword>
<keyword id="KW-0813">Transport</keyword>
<keyword id="KW-0830">Ubiquinone</keyword>
<comment type="function">
    <text evidence="1">NDH-1 shuttles electrons from NADH, via FMN and iron-sulfur (Fe-S) centers, to quinones in the respiratory chain. Couples the redox reaction to proton translocation (for every two electrons transferred, four hydrogen ions are translocated across the cytoplasmic membrane), and thus conserves the redox energy in a proton gradient (By similarity).</text>
</comment>
<comment type="catalytic activity">
    <reaction evidence="2">
        <text>a quinone + NADH + 5 H(+)(in) = a quinol + NAD(+) + 4 H(+)(out)</text>
        <dbReference type="Rhea" id="RHEA:57888"/>
        <dbReference type="ChEBI" id="CHEBI:15378"/>
        <dbReference type="ChEBI" id="CHEBI:24646"/>
        <dbReference type="ChEBI" id="CHEBI:57540"/>
        <dbReference type="ChEBI" id="CHEBI:57945"/>
        <dbReference type="ChEBI" id="CHEBI:132124"/>
    </reaction>
</comment>
<comment type="cofactor">
    <cofactor evidence="2">
        <name>[4Fe-4S] cluster</name>
        <dbReference type="ChEBI" id="CHEBI:49883"/>
    </cofactor>
    <text evidence="2">Binds 1 [4Fe-4S] cluster.</text>
</comment>
<comment type="subunit">
    <text evidence="2">NDH-1 is composed of 14 different subunits. Subunits NuoB, C, D, E, F, and G constitute the peripheral sector of the complex.</text>
</comment>
<comment type="subcellular location">
    <subcellularLocation>
        <location evidence="2">Cell inner membrane</location>
        <topology evidence="2">Peripheral membrane protein</topology>
        <orientation evidence="2">Cytoplasmic side</orientation>
    </subcellularLocation>
</comment>
<comment type="similarity">
    <text evidence="2">Belongs to the complex I 20 kDa subunit family.</text>
</comment>
<proteinExistence type="inferred from homology"/>
<gene>
    <name evidence="2" type="primary">nuoB</name>
    <name type="ordered locus">Rpic_2213</name>
</gene>
<accession>B2U7R0</accession>
<feature type="chain" id="PRO_0000358463" description="NADH-quinone oxidoreductase subunit B">
    <location>
        <begin position="1"/>
        <end position="160"/>
    </location>
</feature>
<feature type="binding site" evidence="2">
    <location>
        <position position="37"/>
    </location>
    <ligand>
        <name>[4Fe-4S] cluster</name>
        <dbReference type="ChEBI" id="CHEBI:49883"/>
    </ligand>
</feature>
<feature type="binding site" evidence="2">
    <location>
        <position position="38"/>
    </location>
    <ligand>
        <name>[4Fe-4S] cluster</name>
        <dbReference type="ChEBI" id="CHEBI:49883"/>
    </ligand>
</feature>
<feature type="binding site" evidence="2">
    <location>
        <position position="102"/>
    </location>
    <ligand>
        <name>[4Fe-4S] cluster</name>
        <dbReference type="ChEBI" id="CHEBI:49883"/>
    </ligand>
</feature>
<feature type="binding site" evidence="2">
    <location>
        <position position="132"/>
    </location>
    <ligand>
        <name>[4Fe-4S] cluster</name>
        <dbReference type="ChEBI" id="CHEBI:49883"/>
    </ligand>
</feature>